<comment type="subcellular location">
    <subcellularLocation>
        <location evidence="2">Host membrane</location>
        <topology evidence="2">Multi-pass membrane protein</topology>
    </subcellularLocation>
</comment>
<comment type="similarity">
    <text evidence="2">Belongs to the plectrovirus ORF10 family.</text>
</comment>
<gene>
    <name type="ORF">ORF10</name>
</gene>
<keyword id="KW-1043">Host membrane</keyword>
<keyword id="KW-0472">Membrane</keyword>
<keyword id="KW-1185">Reference proteome</keyword>
<keyword id="KW-0812">Transmembrane</keyword>
<keyword id="KW-1133">Transmembrane helix</keyword>
<evidence type="ECO:0000255" key="1"/>
<evidence type="ECO:0000305" key="2"/>
<accession>P15901</accession>
<reference key="1">
    <citation type="journal article" date="1990" name="Nucleic Acids Res.">
        <title>Complete nucleotide sequence of the genome of Spiroplasma citri virus SpV1-R8A2 B.</title>
        <authorList>
            <person name="Renaudin J."/>
            <person name="Aullo P."/>
            <person name="Vignault J.C."/>
            <person name="Bove J.M."/>
        </authorList>
    </citation>
    <scope>NUCLEOTIDE SEQUENCE [GENOMIC DNA]</scope>
</reference>
<organismHost>
    <name type="scientific">Spiroplasma citri</name>
    <dbReference type="NCBI Taxonomy" id="2133"/>
</organismHost>
<name>ORF10_SPV1R</name>
<sequence length="67" mass="8337">MQNDWIKLKEFFIYIFLFIDKTNVESITMWNLTQNEYLTLMVGVWIVILFLTWFLLWMVFKIVGYFK</sequence>
<proteinExistence type="inferred from homology"/>
<feature type="chain" id="PRO_0000065784" description="Uncharacterized protein ORF10">
    <location>
        <begin position="1"/>
        <end position="67"/>
    </location>
</feature>
<feature type="transmembrane region" description="Helical" evidence="1">
    <location>
        <begin position="10"/>
        <end position="30"/>
    </location>
</feature>
<feature type="transmembrane region" description="Helical" evidence="1">
    <location>
        <begin position="40"/>
        <end position="60"/>
    </location>
</feature>
<organism>
    <name type="scientific">Spiroplasma virus SpV1-R8A2 B</name>
    <name type="common">SpV1</name>
    <name type="synonym">Spiroplasma virus 1</name>
    <dbReference type="NCBI Taxonomy" id="10854"/>
    <lineage>
        <taxon>Viruses</taxon>
        <taxon>Monodnaviria</taxon>
        <taxon>Loebvirae</taxon>
        <taxon>Hofneiviricota</taxon>
        <taxon>Faserviricetes</taxon>
        <taxon>Tubulavirales</taxon>
        <taxon>Plectroviridae</taxon>
        <taxon>Vespertiliovirus</taxon>
        <taxon>Vespertiliovirus R8A2B</taxon>
    </lineage>
</organism>
<dbReference type="EMBL" id="X51344">
    <property type="protein sequence ID" value="CAA35736.1"/>
    <property type="molecule type" value="Genomic_DNA"/>
</dbReference>
<dbReference type="RefSeq" id="NP_040348.1">
    <property type="nucleotide sequence ID" value="NC_001365.1"/>
</dbReference>
<dbReference type="SMR" id="P15901"/>
<dbReference type="KEGG" id="vg:1260870"/>
<dbReference type="OrthoDB" id="24070at10239"/>
<dbReference type="Proteomes" id="UP000001252">
    <property type="component" value="Segment"/>
</dbReference>
<dbReference type="GO" id="GO:0033644">
    <property type="term" value="C:host cell membrane"/>
    <property type="evidence" value="ECO:0007669"/>
    <property type="project" value="UniProtKB-SubCell"/>
</dbReference>
<dbReference type="GO" id="GO:0016020">
    <property type="term" value="C:membrane"/>
    <property type="evidence" value="ECO:0007669"/>
    <property type="project" value="UniProtKB-KW"/>
</dbReference>
<dbReference type="InterPro" id="IPR021217">
    <property type="entry name" value="Phage_1-C74_Orf10"/>
</dbReference>
<dbReference type="Pfam" id="PF10854">
    <property type="entry name" value="DUF2649"/>
    <property type="match status" value="1"/>
</dbReference>
<protein>
    <recommendedName>
        <fullName>Uncharacterized protein ORF10</fullName>
    </recommendedName>
    <alternativeName>
        <fullName>Gene 10 protein</fullName>
    </alternativeName>
</protein>